<gene>
    <name evidence="16" type="primary">egl-38</name>
    <name evidence="16" type="ORF">C04G2.7</name>
</gene>
<name>PAX5H_CAEEL</name>
<sequence>MEPIWRNYPYPTYPGHHNFQFDPLLSDGSHTGVNQLGGVFVNGRPLADTVRAQIVEMSQHGTRPCDISRQLKVSHGCVSKILGRYYSTGSVRPGVIGGSKPKVATPRVVECIAGYKRANPTMFAWEIRQKLIEDQICGEENVPSVSSINRIVRNKSFMAQLAAPTSVTSSAARPSSATSHHQRSPPRGVQQHMQQSTSVQQLQQLQLTSAATVNSLMTPPAFAMPGTAYSINGLLGTLPQPSLLDDKFTNLSTQSADMSLVYSTGLVGEHDWTMRTPMVILPQNYCGQL</sequence>
<accession>G5ED14</accession>
<reference evidence="14" key="1">
    <citation type="journal article" date="1997" name="Development">
        <title>The PAX gene egl-38 mediates developmental patterning in Caenorhabditis elegans.</title>
        <authorList>
            <person name="Chamberlin H.M."/>
            <person name="Palmer R.E."/>
            <person name="Newman A.P."/>
            <person name="Sternberg P.W."/>
            <person name="Baillie D.L."/>
            <person name="Thomas J.H."/>
        </authorList>
    </citation>
    <scope>NUCLEOTIDE SEQUENCE [MRNA]</scope>
    <scope>FUNCTION</scope>
    <scope>MUTAGENESIS OF GLY-61 AND GLY-97</scope>
</reference>
<reference evidence="15" key="2">
    <citation type="journal article" date="1998" name="Science">
        <title>Genome sequence of the nematode C. elegans: a platform for investigating biology.</title>
        <authorList>
            <consortium name="The C. elegans sequencing consortium"/>
        </authorList>
    </citation>
    <scope>NUCLEOTIDE SEQUENCE [LARGE SCALE GENOMIC DNA]</scope>
    <source>
        <strain evidence="15">Bristol N2</strain>
    </source>
</reference>
<reference evidence="10" key="3">
    <citation type="journal article" date="1999" name="Genetics">
        <title>Characterization of seven genes affecting Caenorhabditis elegans hindgut development.</title>
        <authorList>
            <person name="Chamberlin H.M."/>
            <person name="Brown K.B."/>
            <person name="Sternberg P.W."/>
            <person name="Thomas J.H."/>
        </authorList>
    </citation>
    <scope>FUNCTION</scope>
    <scope>MUTAGENESIS OF GLY-37</scope>
</reference>
<reference evidence="10" key="4">
    <citation type="journal article" date="2001" name="Development">
        <title>EGL-38 Pax regulates the ovo-related gene lin-48 during Caenorhabditis elegans organ development.</title>
        <authorList>
            <person name="Johnson A.D."/>
            <person name="Fitzsimmons D."/>
            <person name="Hagman J."/>
            <person name="Chamberlin H.M."/>
        </authorList>
    </citation>
    <scope>FUNCTION</scope>
    <scope>SUBCELLULAR LOCATION</scope>
    <scope>MUTAGENESIS OF GLY-37; GLY-61 AND GLY-97</scope>
</reference>
<reference evidence="10" key="5">
    <citation type="journal article" date="2005" name="Mech. Dev.">
        <title>Alteration of the DNA binding domain disrupts distinct functions of the C. elegans Pax protein EGL-38.</title>
        <authorList>
            <person name="Zhang G."/>
            <person name="Sleiman S.F."/>
            <person name="Tseng R.J."/>
            <person name="Rajakumar V."/>
            <person name="Wang X."/>
            <person name="Chamberlin H.M."/>
        </authorList>
    </citation>
    <scope>FUNCTION</scope>
    <scope>MUTAGENESIS OF GLY-37; MET-57; GLY-61 AND GLY-97</scope>
</reference>
<reference evidence="10" key="6">
    <citation type="journal article" date="2006" name="Development">
        <title>Pax2/5/8 proteins promote cell survival in C. elegans.</title>
        <authorList>
            <person name="Park D."/>
            <person name="Jia H."/>
            <person name="Rajakumar V."/>
            <person name="Chamberlin H.M."/>
        </authorList>
    </citation>
    <scope>FUNCTION</scope>
    <scope>SUBCELLULAR LOCATION</scope>
    <scope>MUTAGENESIS OF GLY-97</scope>
</reference>
<reference evidence="10" key="7">
    <citation type="journal article" date="2007" name="Dev. Biol.">
        <title>The Pax2/5/8 gene egl-38 coordinates organogenesis of the C. elegans egg-laying system.</title>
        <authorList>
            <person name="Rajakumar V."/>
            <person name="Chamberlin H.M."/>
        </authorList>
    </citation>
    <scope>FUNCTION</scope>
    <scope>DEVELOPMENTAL STAGE</scope>
    <scope>MUTAGENESIS OF GLY-97</scope>
</reference>
<reference evidence="10" key="8">
    <citation type="journal article" date="2019" name="Mech. Dev.">
        <title>EGL-38/Pax coordinates development in the Caenhorhabditis elegans egg-laying system through EGF pathway dependent and independent functions.</title>
        <authorList>
            <person name="Webb Chasser A.M."/>
            <person name="Johnson R.W."/>
            <person name="Chamberlin H.M."/>
        </authorList>
    </citation>
    <scope>FUNCTION</scope>
    <scope>SUBCELLULAR LOCATION</scope>
    <scope>DEVELOPMENTAL STAGE</scope>
    <scope>MUTAGENESIS OF GLY-61 AND GLY-97</scope>
</reference>
<protein>
    <recommendedName>
        <fullName evidence="10">Paired box protein 5 homolog</fullName>
    </recommendedName>
    <alternativeName>
        <fullName evidence="16">Egg laying defective egl-38</fullName>
    </alternativeName>
</protein>
<feature type="chain" id="PRO_0000456085" description="Paired box protein 5 homolog">
    <location>
        <begin position="1"/>
        <end position="289"/>
    </location>
</feature>
<feature type="DNA-binding region" description="Paired" evidence="1">
    <location>
        <begin position="29"/>
        <end position="155"/>
    </location>
</feature>
<feature type="region of interest" description="PAI subdomain" evidence="1">
    <location>
        <begin position="32"/>
        <end position="88"/>
    </location>
</feature>
<feature type="region of interest" description="RED subdomain" evidence="1">
    <location>
        <begin position="107"/>
        <end position="155"/>
    </location>
</feature>
<feature type="region of interest" description="Disordered" evidence="2">
    <location>
        <begin position="166"/>
        <end position="198"/>
    </location>
</feature>
<feature type="compositionally biased region" description="Low complexity" evidence="2">
    <location>
        <begin position="166"/>
        <end position="179"/>
    </location>
</feature>
<feature type="compositionally biased region" description="Low complexity" evidence="2">
    <location>
        <begin position="189"/>
        <end position="198"/>
    </location>
</feature>
<feature type="mutagenesis site" description="In sy287; abnormal tail in males. Normal egg-laying by hermaphrodites when grown at 15 degrees Celsius, but defective at 25 degrees. Mostly normal morphology in vulval cell vulF. Reduced expression of lin-48 in hindgut cells. Reduces DNA binding ability in vitro." evidence="3 4 5">
    <original>G</original>
    <variation>S</variation>
    <location>
        <position position="37"/>
    </location>
</feature>
<feature type="mutagenesis site" description="In gu22; abnormal tail in males. Almost normal egg-laying by hermaphrodites. Mostly normal morphology in vulval cell vulF. Reduced expression of lin-48 in hindgut cells. Reduces DNA binding ability in vitro." evidence="5">
    <original>M</original>
    <variation>I</variation>
    <location>
        <position position="57"/>
    </location>
</feature>
<feature type="mutagenesis site" description="In sy294; abnormal tail in males, due to variable cell lineage defects affecting the cells U, B and F, which would normally develop into the posterior rectal epithelium. Abnormal egg-laying by hermaphrodites. Mostly normal morphology in vulval cell vulF. Abolishes expression of lin-48 in hindgut cells, although expression in other cell types is maintained. Reduces DNA binding ability in vitro. Defects in excretory duct. Abolishes expression of nlp-7. Significantly reduces expression of nlp-2." evidence="4 5 8 9">
    <original>G</original>
    <variation>V</variation>
    <location>
        <position position="61"/>
    </location>
</feature>
<feature type="mutagenesis site" description="In n578; almost normal male tail. Abnormal egg-laying by hermaphrodites, as a result of defects in the vulva and the uterus, and their subsequent connection during the larval L4 stage. Abnormal morphology in vulval cell vulF. Fail to express lin-3 in the vulF cells in the vulva and lacks uv1 cells in the uterus; absence of uvl cells is suppressed in a let-23 mutant background. Increased germline cell apoptosis. Almost normal expression of lin-48 in hindgut cells. Reduces DNA binding ability in vitro. Abolishes expression of nlp-7. Significantly reduces expression of nlp-2." evidence="4 5 6 7 8 9">
    <original>G</original>
    <variation>E</variation>
    <location>
        <position position="97"/>
    </location>
</feature>
<proteinExistence type="evidence at protein level"/>
<keyword id="KW-0158">Chromosome</keyword>
<keyword id="KW-0217">Developmental protein</keyword>
<keyword id="KW-0238">DNA-binding</keyword>
<keyword id="KW-0539">Nucleus</keyword>
<keyword id="KW-0563">Paired box</keyword>
<keyword id="KW-1185">Reference proteome</keyword>
<keyword id="KW-0804">Transcription</keyword>
<keyword id="KW-0805">Transcription regulation</keyword>
<organism evidence="15">
    <name type="scientific">Caenorhabditis elegans</name>
    <dbReference type="NCBI Taxonomy" id="6239"/>
    <lineage>
        <taxon>Eukaryota</taxon>
        <taxon>Metazoa</taxon>
        <taxon>Ecdysozoa</taxon>
        <taxon>Nematoda</taxon>
        <taxon>Chromadorea</taxon>
        <taxon>Rhabditida</taxon>
        <taxon>Rhabditina</taxon>
        <taxon>Rhabditomorpha</taxon>
        <taxon>Rhabditoidea</taxon>
        <taxon>Rhabditidae</taxon>
        <taxon>Peloderinae</taxon>
        <taxon>Caenorhabditis</taxon>
    </lineage>
</organism>
<dbReference type="EMBL" id="AF002702">
    <property type="protein sequence ID" value="AAC27976.1"/>
    <property type="molecule type" value="mRNA"/>
</dbReference>
<dbReference type="EMBL" id="BX284604">
    <property type="protein sequence ID" value="CAA94671.1"/>
    <property type="molecule type" value="Genomic_DNA"/>
</dbReference>
<dbReference type="PIR" id="T18919">
    <property type="entry name" value="T18919"/>
</dbReference>
<dbReference type="RefSeq" id="NP_501836.1">
    <property type="nucleotide sequence ID" value="NM_069435.6"/>
</dbReference>
<dbReference type="SMR" id="G5ED14"/>
<dbReference type="FunCoup" id="G5ED14">
    <property type="interactions" value="125"/>
</dbReference>
<dbReference type="IntAct" id="G5ED14">
    <property type="interactions" value="3"/>
</dbReference>
<dbReference type="STRING" id="6239.C04G2.7.1"/>
<dbReference type="PaxDb" id="6239-C04G2.7"/>
<dbReference type="EnsemblMetazoa" id="C04G2.7.1">
    <property type="protein sequence ID" value="C04G2.7.1"/>
    <property type="gene ID" value="WBGene00001204"/>
</dbReference>
<dbReference type="GeneID" id="177876"/>
<dbReference type="KEGG" id="cel:CELE_C04G2.7"/>
<dbReference type="AGR" id="WB:WBGene00001204"/>
<dbReference type="CTD" id="177876"/>
<dbReference type="WormBase" id="C04G2.7">
    <property type="protein sequence ID" value="CE05215"/>
    <property type="gene ID" value="WBGene00001204"/>
    <property type="gene designation" value="egl-38"/>
</dbReference>
<dbReference type="eggNOG" id="KOG3862">
    <property type="taxonomic scope" value="Eukaryota"/>
</dbReference>
<dbReference type="GeneTree" id="ENSGT00940000165812"/>
<dbReference type="HOGENOM" id="CLU_915967_0_0_1"/>
<dbReference type="InParanoid" id="G5ED14"/>
<dbReference type="OMA" id="HADMSLV"/>
<dbReference type="OrthoDB" id="3225452at2759"/>
<dbReference type="Reactome" id="R-CEL-8939245">
    <property type="pathway name" value="RUNX1 regulates transcription of genes involved in BCR signaling"/>
</dbReference>
<dbReference type="PRO" id="PR:G5ED14"/>
<dbReference type="Proteomes" id="UP000001940">
    <property type="component" value="Chromosome IV"/>
</dbReference>
<dbReference type="Bgee" id="WBGene00001204">
    <property type="expression patterns" value="Expressed in pharyngeal muscle cell (C elegans) and 3 other cell types or tissues"/>
</dbReference>
<dbReference type="GO" id="GO:0000785">
    <property type="term" value="C:chromatin"/>
    <property type="evidence" value="ECO:0000314"/>
    <property type="project" value="UniProtKB"/>
</dbReference>
<dbReference type="GO" id="GO:0005634">
    <property type="term" value="C:nucleus"/>
    <property type="evidence" value="ECO:0000314"/>
    <property type="project" value="WormBase"/>
</dbReference>
<dbReference type="GO" id="GO:0003700">
    <property type="term" value="F:DNA-binding transcription factor activity"/>
    <property type="evidence" value="ECO:0000250"/>
    <property type="project" value="WormBase"/>
</dbReference>
<dbReference type="GO" id="GO:0000981">
    <property type="term" value="F:DNA-binding transcription factor activity, RNA polymerase II-specific"/>
    <property type="evidence" value="ECO:0000318"/>
    <property type="project" value="GO_Central"/>
</dbReference>
<dbReference type="GO" id="GO:0000978">
    <property type="term" value="F:RNA polymerase II cis-regulatory region sequence-specific DNA binding"/>
    <property type="evidence" value="ECO:0000314"/>
    <property type="project" value="UniProtKB"/>
</dbReference>
<dbReference type="GO" id="GO:0000977">
    <property type="term" value="F:RNA polymerase II transcription regulatory region sequence-specific DNA binding"/>
    <property type="evidence" value="ECO:0000314"/>
    <property type="project" value="WormBase"/>
</dbReference>
<dbReference type="GO" id="GO:0043565">
    <property type="term" value="F:sequence-specific DNA binding"/>
    <property type="evidence" value="ECO:0000314"/>
    <property type="project" value="WormBase"/>
</dbReference>
<dbReference type="GO" id="GO:0006915">
    <property type="term" value="P:apoptotic process"/>
    <property type="evidence" value="ECO:0000315"/>
    <property type="project" value="UniProtKB"/>
</dbReference>
<dbReference type="GO" id="GO:0001708">
    <property type="term" value="P:cell fate specification"/>
    <property type="evidence" value="ECO:0000315"/>
    <property type="project" value="WormBase"/>
</dbReference>
<dbReference type="GO" id="GO:0009792">
    <property type="term" value="P:embryo development ending in birth or egg hatching"/>
    <property type="evidence" value="ECO:0000315"/>
    <property type="project" value="WormBase"/>
</dbReference>
<dbReference type="GO" id="GO:0002119">
    <property type="term" value="P:nematode larval development"/>
    <property type="evidence" value="ECO:0000315"/>
    <property type="project" value="WormBase"/>
</dbReference>
<dbReference type="GO" id="GO:0045138">
    <property type="term" value="P:nematode male tail tip morphogenesis"/>
    <property type="evidence" value="ECO:0000315"/>
    <property type="project" value="WormBase"/>
</dbReference>
<dbReference type="GO" id="GO:0045944">
    <property type="term" value="P:positive regulation of transcription by RNA polymerase II"/>
    <property type="evidence" value="ECO:0000315"/>
    <property type="project" value="UniProtKB"/>
</dbReference>
<dbReference type="GO" id="GO:0006357">
    <property type="term" value="P:regulation of transcription by RNA polymerase II"/>
    <property type="evidence" value="ECO:0000318"/>
    <property type="project" value="GO_Central"/>
</dbReference>
<dbReference type="GO" id="GO:0060065">
    <property type="term" value="P:uterus development"/>
    <property type="evidence" value="ECO:0000315"/>
    <property type="project" value="UniProtKB"/>
</dbReference>
<dbReference type="GO" id="GO:0040025">
    <property type="term" value="P:vulval development"/>
    <property type="evidence" value="ECO:0000315"/>
    <property type="project" value="UniProtKB"/>
</dbReference>
<dbReference type="FunFam" id="1.10.10.10:FF:000013">
    <property type="entry name" value="Paired box 8 isoform 1"/>
    <property type="match status" value="1"/>
</dbReference>
<dbReference type="FunFam" id="1.10.10.10:FF:000003">
    <property type="entry name" value="Paired box protein Pax-6"/>
    <property type="match status" value="1"/>
</dbReference>
<dbReference type="Gene3D" id="1.10.10.10">
    <property type="entry name" value="Winged helix-like DNA-binding domain superfamily/Winged helix DNA-binding domain"/>
    <property type="match status" value="2"/>
</dbReference>
<dbReference type="InterPro" id="IPR009057">
    <property type="entry name" value="Homeodomain-like_sf"/>
</dbReference>
<dbReference type="InterPro" id="IPR043182">
    <property type="entry name" value="PAIRED_DNA-bd_dom"/>
</dbReference>
<dbReference type="InterPro" id="IPR001523">
    <property type="entry name" value="Paired_dom"/>
</dbReference>
<dbReference type="InterPro" id="IPR043565">
    <property type="entry name" value="PAX_fam"/>
</dbReference>
<dbReference type="InterPro" id="IPR036388">
    <property type="entry name" value="WH-like_DNA-bd_sf"/>
</dbReference>
<dbReference type="PANTHER" id="PTHR45636:SF31">
    <property type="entry name" value="PAIRED BOX PROTEIN 2 HOMOLOG-RELATED"/>
    <property type="match status" value="1"/>
</dbReference>
<dbReference type="PANTHER" id="PTHR45636">
    <property type="entry name" value="PAIRED BOX PROTEIN PAX-6-RELATED-RELATED"/>
    <property type="match status" value="1"/>
</dbReference>
<dbReference type="Pfam" id="PF00292">
    <property type="entry name" value="PAX"/>
    <property type="match status" value="1"/>
</dbReference>
<dbReference type="PRINTS" id="PR00027">
    <property type="entry name" value="PAIREDBOX"/>
</dbReference>
<dbReference type="SMART" id="SM00351">
    <property type="entry name" value="PAX"/>
    <property type="match status" value="1"/>
</dbReference>
<dbReference type="SUPFAM" id="SSF46689">
    <property type="entry name" value="Homeodomain-like"/>
    <property type="match status" value="1"/>
</dbReference>
<dbReference type="PROSITE" id="PS00034">
    <property type="entry name" value="PAIRED_1"/>
    <property type="match status" value="1"/>
</dbReference>
<dbReference type="PROSITE" id="PS51057">
    <property type="entry name" value="PAIRED_2"/>
    <property type="match status" value="1"/>
</dbReference>
<comment type="function">
    <text evidence="3 4 5 6 7 8 9">Transcription factor (PubMed:17021039). Binds to specific DNA sequence motifs in regulatory elements, for example in the genes encoding transcription factor lin-48, apoptosis regulator ced-9 and neuropeptide-like protein nlp-2 (PubMed:11532910, PubMed:15923112, PubMed:17021039, PubMed:31398431). Specifies cell fate, playing an essential role in embryonic and larval development (PubMed:10511553, PubMed:17020758, PubMed:31398431, PubMed:9374390). Involved in morphogenesis of the vulva and uterus in hermaphrodites and of the rectal epithelium of the tail in males (PubMed:15923112, PubMed:17020758, PubMed:31398431, PubMed:9374390). Plays multiple roles in the development of the egg-laying system, acting in both lin-3/EGF-pathway-dependent and -independent processes (PubMed:17020758, PubMed:31398431). Positively regulates expression of neuropeptide-like proteins nlp-2 and nlp-7 in uvl cells in an EGF-pathway-dependent manner (PubMed:31398431). Involved in negatively modulating apoptosis in germline and somatic cells, acting in partial redundancy with transcription factor pax-2, probably by directly regulating transcription of ced-9 (PubMed:17021039). Positively regulates transcription of lin-48 in hindgut cells and functions in the development of the hindgut (PubMed:10511553, PubMed:11532910, PubMed:15923112).</text>
</comment>
<comment type="subcellular location">
    <subcellularLocation>
        <location evidence="1 11 12 13">Nucleus</location>
    </subcellularLocation>
    <subcellularLocation>
        <location evidence="7">Chromosome</location>
    </subcellularLocation>
</comment>
<comment type="developmental stage">
    <text evidence="6 8">Expressed early in the larval L3 stage, in both P6.px daughters and all four P6.pxx granddaughters following the first and second divisions of the vulval precursor cells (VPCs) (PubMed:31398431). After final VPC divisions, expressed in vulF and vulE cells (derived from P6.p) and persists into mid-L4 larval stage (PubMed:17020758, PubMed:31398431). Expression in vulF and vulE diminishes during mid-L4 so that by the transition to late L4, only uterine ventral (uv1) cell expression remains (PubMed:17020758, PubMed:31398431). Expression in uvl continues through the adult molt into adulthood (PubMed:31398431).</text>
</comment>
<evidence type="ECO:0000255" key="1">
    <source>
        <dbReference type="PROSITE-ProRule" id="PRU00381"/>
    </source>
</evidence>
<evidence type="ECO:0000256" key="2">
    <source>
        <dbReference type="SAM" id="MobiDB-lite"/>
    </source>
</evidence>
<evidence type="ECO:0000269" key="3">
    <source>
    </source>
</evidence>
<evidence type="ECO:0000269" key="4">
    <source>
    </source>
</evidence>
<evidence type="ECO:0000269" key="5">
    <source>
    </source>
</evidence>
<evidence type="ECO:0000269" key="6">
    <source>
    </source>
</evidence>
<evidence type="ECO:0000269" key="7">
    <source>
    </source>
</evidence>
<evidence type="ECO:0000269" key="8">
    <source>
    </source>
</evidence>
<evidence type="ECO:0000269" key="9">
    <source>
    </source>
</evidence>
<evidence type="ECO:0000305" key="10"/>
<evidence type="ECO:0000305" key="11">
    <source>
    </source>
</evidence>
<evidence type="ECO:0000305" key="12">
    <source>
    </source>
</evidence>
<evidence type="ECO:0000305" key="13">
    <source>
    </source>
</evidence>
<evidence type="ECO:0000312" key="14">
    <source>
        <dbReference type="EMBL" id="AAC27976.1"/>
    </source>
</evidence>
<evidence type="ECO:0000312" key="15">
    <source>
        <dbReference type="Proteomes" id="UP000001940"/>
    </source>
</evidence>
<evidence type="ECO:0000312" key="16">
    <source>
        <dbReference type="WormBase" id="C04G2.7"/>
    </source>
</evidence>